<reference key="1">
    <citation type="journal article" date="2002" name="Nature">
        <title>The genome sequence of Schizosaccharomyces pombe.</title>
        <authorList>
            <person name="Wood V."/>
            <person name="Gwilliam R."/>
            <person name="Rajandream M.A."/>
            <person name="Lyne M.H."/>
            <person name="Lyne R."/>
            <person name="Stewart A."/>
            <person name="Sgouros J.G."/>
            <person name="Peat N."/>
            <person name="Hayles J."/>
            <person name="Baker S.G."/>
            <person name="Basham D."/>
            <person name="Bowman S."/>
            <person name="Brooks K."/>
            <person name="Brown D."/>
            <person name="Brown S."/>
            <person name="Chillingworth T."/>
            <person name="Churcher C.M."/>
            <person name="Collins M."/>
            <person name="Connor R."/>
            <person name="Cronin A."/>
            <person name="Davis P."/>
            <person name="Feltwell T."/>
            <person name="Fraser A."/>
            <person name="Gentles S."/>
            <person name="Goble A."/>
            <person name="Hamlin N."/>
            <person name="Harris D.E."/>
            <person name="Hidalgo J."/>
            <person name="Hodgson G."/>
            <person name="Holroyd S."/>
            <person name="Hornsby T."/>
            <person name="Howarth S."/>
            <person name="Huckle E.J."/>
            <person name="Hunt S."/>
            <person name="Jagels K."/>
            <person name="James K.D."/>
            <person name="Jones L."/>
            <person name="Jones M."/>
            <person name="Leather S."/>
            <person name="McDonald S."/>
            <person name="McLean J."/>
            <person name="Mooney P."/>
            <person name="Moule S."/>
            <person name="Mungall K.L."/>
            <person name="Murphy L.D."/>
            <person name="Niblett D."/>
            <person name="Odell C."/>
            <person name="Oliver K."/>
            <person name="O'Neil S."/>
            <person name="Pearson D."/>
            <person name="Quail M.A."/>
            <person name="Rabbinowitsch E."/>
            <person name="Rutherford K.M."/>
            <person name="Rutter S."/>
            <person name="Saunders D."/>
            <person name="Seeger K."/>
            <person name="Sharp S."/>
            <person name="Skelton J."/>
            <person name="Simmonds M.N."/>
            <person name="Squares R."/>
            <person name="Squares S."/>
            <person name="Stevens K."/>
            <person name="Taylor K."/>
            <person name="Taylor R.G."/>
            <person name="Tivey A."/>
            <person name="Walsh S.V."/>
            <person name="Warren T."/>
            <person name="Whitehead S."/>
            <person name="Woodward J.R."/>
            <person name="Volckaert G."/>
            <person name="Aert R."/>
            <person name="Robben J."/>
            <person name="Grymonprez B."/>
            <person name="Weltjens I."/>
            <person name="Vanstreels E."/>
            <person name="Rieger M."/>
            <person name="Schaefer M."/>
            <person name="Mueller-Auer S."/>
            <person name="Gabel C."/>
            <person name="Fuchs M."/>
            <person name="Duesterhoeft A."/>
            <person name="Fritzc C."/>
            <person name="Holzer E."/>
            <person name="Moestl D."/>
            <person name="Hilbert H."/>
            <person name="Borzym K."/>
            <person name="Langer I."/>
            <person name="Beck A."/>
            <person name="Lehrach H."/>
            <person name="Reinhardt R."/>
            <person name="Pohl T.M."/>
            <person name="Eger P."/>
            <person name="Zimmermann W."/>
            <person name="Wedler H."/>
            <person name="Wambutt R."/>
            <person name="Purnelle B."/>
            <person name="Goffeau A."/>
            <person name="Cadieu E."/>
            <person name="Dreano S."/>
            <person name="Gloux S."/>
            <person name="Lelaure V."/>
            <person name="Mottier S."/>
            <person name="Galibert F."/>
            <person name="Aves S.J."/>
            <person name="Xiang Z."/>
            <person name="Hunt C."/>
            <person name="Moore K."/>
            <person name="Hurst S.M."/>
            <person name="Lucas M."/>
            <person name="Rochet M."/>
            <person name="Gaillardin C."/>
            <person name="Tallada V.A."/>
            <person name="Garzon A."/>
            <person name="Thode G."/>
            <person name="Daga R.R."/>
            <person name="Cruzado L."/>
            <person name="Jimenez J."/>
            <person name="Sanchez M."/>
            <person name="del Rey F."/>
            <person name="Benito J."/>
            <person name="Dominguez A."/>
            <person name="Revuelta J.L."/>
            <person name="Moreno S."/>
            <person name="Armstrong J."/>
            <person name="Forsburg S.L."/>
            <person name="Cerutti L."/>
            <person name="Lowe T."/>
            <person name="McCombie W.R."/>
            <person name="Paulsen I."/>
            <person name="Potashkin J."/>
            <person name="Shpakovski G.V."/>
            <person name="Ussery D."/>
            <person name="Barrell B.G."/>
            <person name="Nurse P."/>
        </authorList>
    </citation>
    <scope>NUCLEOTIDE SEQUENCE [LARGE SCALE GENOMIC DNA]</scope>
    <source>
        <strain>972 / ATCC 24843</strain>
    </source>
</reference>
<reference key="2">
    <citation type="journal article" date="2008" name="J. Proteome Res.">
        <title>Phosphoproteome analysis of fission yeast.</title>
        <authorList>
            <person name="Wilson-Grady J.T."/>
            <person name="Villen J."/>
            <person name="Gygi S.P."/>
        </authorList>
    </citation>
    <scope>PHOSPHORYLATION [LARGE SCALE ANALYSIS] AT SER-883</scope>
    <scope>IDENTIFICATION BY MASS SPECTROMETRY</scope>
</reference>
<accession>Q09863</accession>
<evidence type="ECO:0000250" key="1"/>
<evidence type="ECO:0000255" key="2"/>
<evidence type="ECO:0000256" key="3">
    <source>
        <dbReference type="SAM" id="MobiDB-lite"/>
    </source>
</evidence>
<evidence type="ECO:0000269" key="4">
    <source>
    </source>
</evidence>
<evidence type="ECO:0000305" key="5"/>
<name>NST1_SCHPO</name>
<proteinExistence type="evidence at protein level"/>
<dbReference type="EMBL" id="Z66525">
    <property type="protein sequence ID" value="CAA91432.1"/>
    <property type="molecule type" value="Genomic_DNA"/>
</dbReference>
<dbReference type="EMBL" id="CU329670">
    <property type="protein sequence ID" value="CAB66473.1"/>
    <property type="molecule type" value="Genomic_DNA"/>
</dbReference>
<dbReference type="PIR" id="T38511">
    <property type="entry name" value="S62516"/>
</dbReference>
<dbReference type="RefSeq" id="NP_594568.1">
    <property type="nucleotide sequence ID" value="NM_001019997.2"/>
</dbReference>
<dbReference type="SMR" id="Q09863"/>
<dbReference type="BioGRID" id="278947">
    <property type="interactions" value="1"/>
</dbReference>
<dbReference type="STRING" id="284812.Q09863"/>
<dbReference type="iPTMnet" id="Q09863"/>
<dbReference type="PaxDb" id="4896-SPAC29E6.10c.1"/>
<dbReference type="EnsemblFungi" id="SPAC29E6.10c.1">
    <property type="protein sequence ID" value="SPAC29E6.10c.1:pep"/>
    <property type="gene ID" value="SPAC29E6.10c"/>
</dbReference>
<dbReference type="GeneID" id="2542488"/>
<dbReference type="KEGG" id="spo:2542488"/>
<dbReference type="PomBase" id="SPAC29E6.10c">
    <property type="gene designation" value="nst1"/>
</dbReference>
<dbReference type="VEuPathDB" id="FungiDB:SPAC29E6.10c"/>
<dbReference type="eggNOG" id="ENOG502QSSK">
    <property type="taxonomic scope" value="Eukaryota"/>
</dbReference>
<dbReference type="HOGENOM" id="CLU_281888_0_0_1"/>
<dbReference type="InParanoid" id="Q09863"/>
<dbReference type="OMA" id="YANIQRN"/>
<dbReference type="PRO" id="PR:Q09863"/>
<dbReference type="Proteomes" id="UP000002485">
    <property type="component" value="Chromosome I"/>
</dbReference>
<dbReference type="GO" id="GO:0005737">
    <property type="term" value="C:cytoplasm"/>
    <property type="evidence" value="ECO:0007005"/>
    <property type="project" value="PomBase"/>
</dbReference>
<dbReference type="GO" id="GO:0005829">
    <property type="term" value="C:cytosol"/>
    <property type="evidence" value="ECO:0007005"/>
    <property type="project" value="PomBase"/>
</dbReference>
<dbReference type="GO" id="GO:0000932">
    <property type="term" value="C:P-body"/>
    <property type="evidence" value="ECO:0000266"/>
    <property type="project" value="PomBase"/>
</dbReference>
<dbReference type="GO" id="GO:2000766">
    <property type="term" value="P:negative regulation of cytoplasmic translation"/>
    <property type="evidence" value="ECO:0000266"/>
    <property type="project" value="PomBase"/>
</dbReference>
<dbReference type="InterPro" id="IPR051195">
    <property type="entry name" value="Fungal_stress_NST1"/>
</dbReference>
<dbReference type="InterPro" id="IPR025279">
    <property type="entry name" value="NST1"/>
</dbReference>
<dbReference type="PANTHER" id="PTHR31780:SF10">
    <property type="entry name" value="LD36051P"/>
    <property type="match status" value="1"/>
</dbReference>
<dbReference type="PANTHER" id="PTHR31780">
    <property type="entry name" value="STRESS RESPONSE PROTEIN NST1-RELATED"/>
    <property type="match status" value="1"/>
</dbReference>
<dbReference type="Pfam" id="PF13945">
    <property type="entry name" value="NST1"/>
    <property type="match status" value="1"/>
</dbReference>
<protein>
    <recommendedName>
        <fullName>Stress response protein nst1</fullName>
    </recommendedName>
</protein>
<keyword id="KW-0175">Coiled coil</keyword>
<keyword id="KW-0963">Cytoplasm</keyword>
<keyword id="KW-0597">Phosphoprotein</keyword>
<keyword id="KW-1185">Reference proteome</keyword>
<keyword id="KW-0346">Stress response</keyword>
<organism>
    <name type="scientific">Schizosaccharomyces pombe (strain 972 / ATCC 24843)</name>
    <name type="common">Fission yeast</name>
    <dbReference type="NCBI Taxonomy" id="284812"/>
    <lineage>
        <taxon>Eukaryota</taxon>
        <taxon>Fungi</taxon>
        <taxon>Dikarya</taxon>
        <taxon>Ascomycota</taxon>
        <taxon>Taphrinomycotina</taxon>
        <taxon>Schizosaccharomycetes</taxon>
        <taxon>Schizosaccharomycetales</taxon>
        <taxon>Schizosaccharomycetaceae</taxon>
        <taxon>Schizosaccharomyces</taxon>
    </lineage>
</organism>
<sequence length="1085" mass="122941">MNDKALRTEALSVGLEPPSFKDLLIPIPNSGTKKKNKKKKKPKAKKNVETQANVDLLGSAGTDSAVTDVGANNGVIDHQASLELSNLNSRISHPQLVSANGDDSSLINVEGISSTDWQFTLESDDTIEHSPQCILSTSSFVDEAEFPVHIPGLEDATSSNMSPNSVQNNMNLNTVALGSSTSSKRKKKKKKKSKANSASLNVDDQRDFEQVYSTDVAITYRNGQALSYYNGSVRQASMNNNVNNNKSKDIWSSSNTEEREQIREFWLSLSESERRSLVKVEKEAVLQKMKEQQKYSCSCSVCGRKRLAIEEELEVLYDAYYEELEQYANIQRNLANTESVNASDEGSDKSQKGIISDSPKLLSIPLNNVPSKSLNDDITQDELNSSNADVDEEVIETTSLEEKNVDNQEFVTSISNGNQTLEDTSHSPQTQPPFQPPYPSKADEKNSYHSDLYNFGSSLTVKGGILTVADDLLKNDGKKFIEMMEQLAERRMQREDNSNFHEPELYESGLEYDEDEEEDEEDVDEDELDLMTDEQRMEEGRRMFQIFAARLFEQRVLQAYREKVAQQRQAKLLEEIEEENKRKQERELKKIREKEKKRDKKKQLKLAKEEERQRREAERLAEQAAQKALEAKRQEEARKKREEQRLKREQEKKQQELERQKREEKQKQKEREKKLKKQQQEADREKMAREQRLREEEEKRILEERKRREKLDKEEEERRRRELLEKESEEKERRLREAKIAAFFAPNQTKEGSDGCTTSSQLGLFEKKGDLVNDEDKLSSHLLDSVPNALRQAPIGLKNTNNLSERNASSNLLNSSLFSSFNSVNPLISLEPNPLNRTLNNSVNLTDFGRKPNGLHSPSSLLSNSNNFGLNPNARHSLSRANSPVHHYPFATPPSQRANKYPLNNGANVPALLNSFSSPQLSPLVNRVLNEPSSSPLSSSSLKSPLSKEGVLNQQGHEQYNFSLSPSIRNKLSPICRPSQGSSPKLKNNLSNTEERMGSRALLDDKTDSVITASNSTTSGLSRDESSNPNNYELLNAFNQNTWKISRSTSNKSLIPESPWGVALGAFTPNASTQSIPWGNRTWTD</sequence>
<feature type="chain" id="PRO_0000116425" description="Stress response protein nst1">
    <location>
        <begin position="1"/>
        <end position="1085"/>
    </location>
</feature>
<feature type="region of interest" description="Disordered" evidence="3">
    <location>
        <begin position="22"/>
        <end position="52"/>
    </location>
</feature>
<feature type="region of interest" description="Disordered" evidence="3">
    <location>
        <begin position="176"/>
        <end position="200"/>
    </location>
</feature>
<feature type="region of interest" description="Disordered" evidence="3">
    <location>
        <begin position="418"/>
        <end position="446"/>
    </location>
</feature>
<feature type="region of interest" description="Disordered" evidence="3">
    <location>
        <begin position="492"/>
        <end position="526"/>
    </location>
</feature>
<feature type="region of interest" description="Disordered" evidence="3">
    <location>
        <begin position="577"/>
        <end position="731"/>
    </location>
</feature>
<feature type="region of interest" description="Disordered" evidence="3">
    <location>
        <begin position="877"/>
        <end position="900"/>
    </location>
</feature>
<feature type="region of interest" description="Disordered" evidence="3">
    <location>
        <begin position="927"/>
        <end position="950"/>
    </location>
</feature>
<feature type="region of interest" description="Disordered" evidence="3">
    <location>
        <begin position="971"/>
        <end position="996"/>
    </location>
</feature>
<feature type="coiled-coil region" evidence="2">
    <location>
        <begin position="561"/>
        <end position="744"/>
    </location>
</feature>
<feature type="compositionally biased region" description="Basic residues" evidence="3">
    <location>
        <begin position="32"/>
        <end position="45"/>
    </location>
</feature>
<feature type="compositionally biased region" description="Basic residues" evidence="3">
    <location>
        <begin position="183"/>
        <end position="194"/>
    </location>
</feature>
<feature type="compositionally biased region" description="Pro residues" evidence="3">
    <location>
        <begin position="430"/>
        <end position="439"/>
    </location>
</feature>
<feature type="compositionally biased region" description="Basic and acidic residues" evidence="3">
    <location>
        <begin position="492"/>
        <end position="504"/>
    </location>
</feature>
<feature type="compositionally biased region" description="Acidic residues" evidence="3">
    <location>
        <begin position="510"/>
        <end position="526"/>
    </location>
</feature>
<feature type="compositionally biased region" description="Basic and acidic residues" evidence="3">
    <location>
        <begin position="577"/>
        <end position="596"/>
    </location>
</feature>
<feature type="compositionally biased region" description="Basic and acidic residues" evidence="3">
    <location>
        <begin position="606"/>
        <end position="621"/>
    </location>
</feature>
<feature type="compositionally biased region" description="Basic and acidic residues" evidence="3">
    <location>
        <begin position="629"/>
        <end position="731"/>
    </location>
</feature>
<feature type="compositionally biased region" description="Low complexity" evidence="3">
    <location>
        <begin position="932"/>
        <end position="948"/>
    </location>
</feature>
<feature type="compositionally biased region" description="Polar residues" evidence="3">
    <location>
        <begin position="979"/>
        <end position="992"/>
    </location>
</feature>
<feature type="modified residue" description="Phosphoserine" evidence="4">
    <location>
        <position position="883"/>
    </location>
</feature>
<gene>
    <name type="primary">nst1</name>
    <name type="ORF">SPAC29E6.10c</name>
    <name type="ORF">SPAC30.14c</name>
</gene>
<comment type="function">
    <text evidence="1">May act as a negative regulator of salt tolerance.</text>
</comment>
<comment type="subcellular location">
    <subcellularLocation>
        <location evidence="1">Cytoplasm</location>
    </subcellularLocation>
</comment>
<comment type="similarity">
    <text evidence="5">Belongs to the NST1 family.</text>
</comment>